<keyword id="KW-0328">Glycosyltransferase</keyword>
<keyword id="KW-0460">Magnesium</keyword>
<keyword id="KW-0665">Pyrimidine biosynthesis</keyword>
<keyword id="KW-1185">Reference proteome</keyword>
<keyword id="KW-0808">Transferase</keyword>
<accession>A6X294</accession>
<evidence type="ECO:0000255" key="1">
    <source>
        <dbReference type="HAMAP-Rule" id="MF_01208"/>
    </source>
</evidence>
<organism>
    <name type="scientific">Brucella anthropi (strain ATCC 49188 / DSM 6882 / CCUG 24695 / JCM 21032 / LMG 3331 / NBRC 15819 / NCTC 12168 / Alc 37)</name>
    <name type="common">Ochrobactrum anthropi</name>
    <dbReference type="NCBI Taxonomy" id="439375"/>
    <lineage>
        <taxon>Bacteria</taxon>
        <taxon>Pseudomonadati</taxon>
        <taxon>Pseudomonadota</taxon>
        <taxon>Alphaproteobacteria</taxon>
        <taxon>Hyphomicrobiales</taxon>
        <taxon>Brucellaceae</taxon>
        <taxon>Brucella/Ochrobactrum group</taxon>
        <taxon>Brucella</taxon>
    </lineage>
</organism>
<protein>
    <recommendedName>
        <fullName evidence="1">Orotate phosphoribosyltransferase</fullName>
        <shortName evidence="1">OPRT</shortName>
        <shortName evidence="1">OPRTase</shortName>
        <ecNumber evidence="1">2.4.2.10</ecNumber>
    </recommendedName>
</protein>
<dbReference type="EC" id="2.4.2.10" evidence="1"/>
<dbReference type="EMBL" id="CP000758">
    <property type="protein sequence ID" value="ABS15348.1"/>
    <property type="molecule type" value="Genomic_DNA"/>
</dbReference>
<dbReference type="RefSeq" id="WP_010661632.1">
    <property type="nucleotide sequence ID" value="NC_009667.1"/>
</dbReference>
<dbReference type="SMR" id="A6X294"/>
<dbReference type="STRING" id="439375.Oant_2635"/>
<dbReference type="GeneID" id="61316906"/>
<dbReference type="KEGG" id="oan:Oant_2635"/>
<dbReference type="PATRIC" id="fig|439375.7.peg.2777"/>
<dbReference type="eggNOG" id="COG0461">
    <property type="taxonomic scope" value="Bacteria"/>
</dbReference>
<dbReference type="HOGENOM" id="CLU_074878_3_0_5"/>
<dbReference type="PhylomeDB" id="A6X294"/>
<dbReference type="UniPathway" id="UPA00070">
    <property type="reaction ID" value="UER00119"/>
</dbReference>
<dbReference type="Proteomes" id="UP000002301">
    <property type="component" value="Chromosome 1"/>
</dbReference>
<dbReference type="GO" id="GO:0000287">
    <property type="term" value="F:magnesium ion binding"/>
    <property type="evidence" value="ECO:0007669"/>
    <property type="project" value="UniProtKB-UniRule"/>
</dbReference>
<dbReference type="GO" id="GO:0004588">
    <property type="term" value="F:orotate phosphoribosyltransferase activity"/>
    <property type="evidence" value="ECO:0007669"/>
    <property type="project" value="UniProtKB-UniRule"/>
</dbReference>
<dbReference type="GO" id="GO:0044205">
    <property type="term" value="P:'de novo' UMP biosynthetic process"/>
    <property type="evidence" value="ECO:0007669"/>
    <property type="project" value="UniProtKB-UniRule"/>
</dbReference>
<dbReference type="GO" id="GO:0019856">
    <property type="term" value="P:pyrimidine nucleobase biosynthetic process"/>
    <property type="evidence" value="ECO:0007669"/>
    <property type="project" value="InterPro"/>
</dbReference>
<dbReference type="CDD" id="cd06223">
    <property type="entry name" value="PRTases_typeI"/>
    <property type="match status" value="1"/>
</dbReference>
<dbReference type="Gene3D" id="3.40.50.2020">
    <property type="match status" value="1"/>
</dbReference>
<dbReference type="HAMAP" id="MF_01208">
    <property type="entry name" value="PyrE"/>
    <property type="match status" value="1"/>
</dbReference>
<dbReference type="InterPro" id="IPR023031">
    <property type="entry name" value="OPRT"/>
</dbReference>
<dbReference type="InterPro" id="IPR006273">
    <property type="entry name" value="Orotate_PRibTrfase_bac"/>
</dbReference>
<dbReference type="InterPro" id="IPR000836">
    <property type="entry name" value="PRibTrfase_dom"/>
</dbReference>
<dbReference type="InterPro" id="IPR029057">
    <property type="entry name" value="PRTase-like"/>
</dbReference>
<dbReference type="NCBIfam" id="TIGR01367">
    <property type="entry name" value="pyrE_Therm"/>
    <property type="match status" value="1"/>
</dbReference>
<dbReference type="PANTHER" id="PTHR19278">
    <property type="entry name" value="OROTATE PHOSPHORIBOSYLTRANSFERASE"/>
    <property type="match status" value="1"/>
</dbReference>
<dbReference type="PANTHER" id="PTHR19278:SF9">
    <property type="entry name" value="URIDINE 5'-MONOPHOSPHATE SYNTHASE"/>
    <property type="match status" value="1"/>
</dbReference>
<dbReference type="Pfam" id="PF00156">
    <property type="entry name" value="Pribosyltran"/>
    <property type="match status" value="1"/>
</dbReference>
<dbReference type="SUPFAM" id="SSF53271">
    <property type="entry name" value="PRTase-like"/>
    <property type="match status" value="1"/>
</dbReference>
<dbReference type="PROSITE" id="PS00103">
    <property type="entry name" value="PUR_PYR_PR_TRANSFER"/>
    <property type="match status" value="1"/>
</dbReference>
<comment type="function">
    <text evidence="1">Catalyzes the transfer of a ribosyl phosphate group from 5-phosphoribose 1-diphosphate to orotate, leading to the formation of orotidine monophosphate (OMP).</text>
</comment>
<comment type="catalytic activity">
    <reaction evidence="1">
        <text>orotidine 5'-phosphate + diphosphate = orotate + 5-phospho-alpha-D-ribose 1-diphosphate</text>
        <dbReference type="Rhea" id="RHEA:10380"/>
        <dbReference type="ChEBI" id="CHEBI:30839"/>
        <dbReference type="ChEBI" id="CHEBI:33019"/>
        <dbReference type="ChEBI" id="CHEBI:57538"/>
        <dbReference type="ChEBI" id="CHEBI:58017"/>
        <dbReference type="EC" id="2.4.2.10"/>
    </reaction>
</comment>
<comment type="cofactor">
    <cofactor evidence="1">
        <name>Mg(2+)</name>
        <dbReference type="ChEBI" id="CHEBI:18420"/>
    </cofactor>
</comment>
<comment type="pathway">
    <text evidence="1">Pyrimidine metabolism; UMP biosynthesis via de novo pathway; UMP from orotate: step 1/2.</text>
</comment>
<comment type="subunit">
    <text evidence="1">Homodimer.</text>
</comment>
<comment type="similarity">
    <text evidence="1">Belongs to the purine/pyrimidine phosphoribosyltransferase family. PyrE subfamily.</text>
</comment>
<feature type="chain" id="PRO_1000066265" description="Orotate phosphoribosyltransferase">
    <location>
        <begin position="1"/>
        <end position="192"/>
    </location>
</feature>
<feature type="binding site" evidence="1">
    <location>
        <begin position="116"/>
        <end position="124"/>
    </location>
    <ligand>
        <name>5-phospho-alpha-D-ribose 1-diphosphate</name>
        <dbReference type="ChEBI" id="CHEBI:58017"/>
    </ligand>
</feature>
<feature type="binding site" evidence="1">
    <location>
        <position position="120"/>
    </location>
    <ligand>
        <name>orotate</name>
        <dbReference type="ChEBI" id="CHEBI:30839"/>
    </ligand>
</feature>
<feature type="binding site" evidence="1">
    <location>
        <position position="148"/>
    </location>
    <ligand>
        <name>orotate</name>
        <dbReference type="ChEBI" id="CHEBI:30839"/>
    </ligand>
</feature>
<gene>
    <name evidence="1" type="primary">pyrE</name>
    <name type="ordered locus">Oant_2635</name>
</gene>
<proteinExistence type="inferred from homology"/>
<sequence length="192" mass="20774">MNTEDVLAVFREAGAILEGHFILTSGLRSPVFLQKARVFMHADKTEKLCKALAEKIQAADLGPIDYVVGPAIGGLIPSYETSRHLRVPSVWVERENGVFRLRRFDVPKGARVVIVEDIVTTGLSIRETIDCMKDLGIEVVAAACIVDRSAGKADVGTKLIALAEYEVPAYPADKLPPELAAIPAVKPGSRNI</sequence>
<reference key="1">
    <citation type="journal article" date="2011" name="J. Bacteriol.">
        <title>Genome of Ochrobactrum anthropi ATCC 49188 T, a versatile opportunistic pathogen and symbiont of several eukaryotic hosts.</title>
        <authorList>
            <person name="Chain P.S."/>
            <person name="Lang D.M."/>
            <person name="Comerci D.J."/>
            <person name="Malfatti S.A."/>
            <person name="Vergez L.M."/>
            <person name="Shin M."/>
            <person name="Ugalde R.A."/>
            <person name="Garcia E."/>
            <person name="Tolmasky M.E."/>
        </authorList>
    </citation>
    <scope>NUCLEOTIDE SEQUENCE [LARGE SCALE GENOMIC DNA]</scope>
    <source>
        <strain>ATCC 49188 / DSM 6882 / CCUG 24695 / JCM 21032 / LMG 3331 / NBRC 15819 / NCTC 12168 / Alc 37</strain>
    </source>
</reference>
<name>PYRE_BRUA4</name>